<proteinExistence type="evidence at protein level"/>
<keyword id="KW-0025">Alternative splicing</keyword>
<keyword id="KW-0094">Blood coagulation</keyword>
<keyword id="KW-0106">Calcium</keyword>
<keyword id="KW-0175">Coiled coil</keyword>
<keyword id="KW-0903">Direct protein sequencing</keyword>
<keyword id="KW-1015">Disulfide bond</keyword>
<keyword id="KW-0325">Glycoprotein</keyword>
<keyword id="KW-0356">Hemostasis</keyword>
<keyword id="KW-1017">Isopeptide bond</keyword>
<keyword id="KW-0479">Metal-binding</keyword>
<keyword id="KW-0597">Phosphoprotein</keyword>
<keyword id="KW-1185">Reference proteome</keyword>
<keyword id="KW-0964">Secreted</keyword>
<keyword id="KW-0732">Signal</keyword>
<protein>
    <recommendedName>
        <fullName>Fibrinogen gamma chain</fullName>
    </recommendedName>
</protein>
<dbReference type="EMBL" id="J00733">
    <property type="status" value="NOT_ANNOTATED_CDS"/>
    <property type="molecule type" value="Genomic_DNA"/>
</dbReference>
<dbReference type="EMBL" id="J00734">
    <property type="status" value="NOT_ANNOTATED_CDS"/>
    <property type="molecule type" value="mRNA"/>
</dbReference>
<dbReference type="EMBL" id="J00735">
    <property type="status" value="NOT_ANNOTATED_CDS"/>
    <property type="molecule type" value="mRNA"/>
</dbReference>
<dbReference type="EMBL" id="X05860">
    <property type="protein sequence ID" value="CAA29289.1"/>
    <property type="molecule type" value="Genomic_DNA"/>
</dbReference>
<dbReference type="EMBL" id="X05861">
    <property type="protein sequence ID" value="CAA29289.1"/>
    <property type="status" value="JOINED"/>
    <property type="molecule type" value="Genomic_DNA"/>
</dbReference>
<dbReference type="EMBL" id="BC078893">
    <property type="protein sequence ID" value="AAH78893.1"/>
    <property type="molecule type" value="mRNA"/>
</dbReference>
<dbReference type="EMBL" id="K01337">
    <property type="protein sequence ID" value="AAA98626.1"/>
    <property type="molecule type" value="Genomic_DNA"/>
</dbReference>
<dbReference type="PIR" id="A03128">
    <property type="entry name" value="FGRTGB"/>
</dbReference>
<dbReference type="PIR" id="A90828">
    <property type="entry name" value="FGRTGA"/>
</dbReference>
<dbReference type="RefSeq" id="NP_036691.2">
    <molecule id="P02680-2"/>
    <property type="nucleotide sequence ID" value="NM_012559.2"/>
</dbReference>
<dbReference type="RefSeq" id="XP_006232587.1">
    <molecule id="P02680-1"/>
    <property type="nucleotide sequence ID" value="XM_006232525.1"/>
</dbReference>
<dbReference type="SMR" id="P02680"/>
<dbReference type="BioGRID" id="246539">
    <property type="interactions" value="1"/>
</dbReference>
<dbReference type="FunCoup" id="P02680">
    <property type="interactions" value="152"/>
</dbReference>
<dbReference type="IntAct" id="P02680">
    <property type="interactions" value="2"/>
</dbReference>
<dbReference type="STRING" id="10116.ENSRNOP00000032735"/>
<dbReference type="GlyCosmos" id="P02680">
    <property type="glycosylation" value="1 site, No reported glycans"/>
</dbReference>
<dbReference type="GlyGen" id="P02680">
    <property type="glycosylation" value="2 sites, 1 O-linked glycan (1 site)"/>
</dbReference>
<dbReference type="iPTMnet" id="P02680"/>
<dbReference type="PhosphoSitePlus" id="P02680"/>
<dbReference type="PaxDb" id="10116-ENSRNOP00000032735"/>
<dbReference type="Ensembl" id="ENSRNOT00000034521.7">
    <molecule id="P02680-2"/>
    <property type="protein sequence ID" value="ENSRNOP00000032735.4"/>
    <property type="gene ID" value="ENSRNOG00000025074.7"/>
</dbReference>
<dbReference type="Ensembl" id="ENSRNOT00000115976.1">
    <molecule id="P02680-1"/>
    <property type="protein sequence ID" value="ENSRNOP00000082495.1"/>
    <property type="gene ID" value="ENSRNOG00000025074.7"/>
</dbReference>
<dbReference type="GeneID" id="24367"/>
<dbReference type="KEGG" id="rno:24367"/>
<dbReference type="UCSC" id="RGD:2613">
    <molecule id="P02680-1"/>
    <property type="organism name" value="rat"/>
</dbReference>
<dbReference type="AGR" id="RGD:2613"/>
<dbReference type="CTD" id="2266"/>
<dbReference type="RGD" id="2613">
    <property type="gene designation" value="Fgg"/>
</dbReference>
<dbReference type="eggNOG" id="KOG2579">
    <property type="taxonomic scope" value="Eukaryota"/>
</dbReference>
<dbReference type="GeneTree" id="ENSGT00940000158467"/>
<dbReference type="HOGENOM" id="CLU_038628_13_0_1"/>
<dbReference type="InParanoid" id="P02680"/>
<dbReference type="OMA" id="TYHNGMR"/>
<dbReference type="OrthoDB" id="10063010at2759"/>
<dbReference type="PhylomeDB" id="P02680"/>
<dbReference type="TreeFam" id="TF336658"/>
<dbReference type="Reactome" id="R-RNO-114608">
    <property type="pathway name" value="Platelet degranulation"/>
</dbReference>
<dbReference type="Reactome" id="R-RNO-140875">
    <property type="pathway name" value="Common Pathway of Fibrin Clot Formation"/>
</dbReference>
<dbReference type="Reactome" id="R-RNO-216083">
    <property type="pathway name" value="Integrin cell surface interactions"/>
</dbReference>
<dbReference type="Reactome" id="R-RNO-354192">
    <property type="pathway name" value="Integrin signaling"/>
</dbReference>
<dbReference type="Reactome" id="R-RNO-354194">
    <property type="pathway name" value="GRB2:SOS provides linkage to MAPK signaling for Integrins"/>
</dbReference>
<dbReference type="Reactome" id="R-RNO-372708">
    <property type="pathway name" value="p130Cas linkage to MAPK signaling for integrins"/>
</dbReference>
<dbReference type="Reactome" id="R-RNO-381426">
    <property type="pathway name" value="Regulation of Insulin-like Growth Factor (IGF) transport and uptake by Insulin-like Growth Factor Binding Proteins (IGFBPs)"/>
</dbReference>
<dbReference type="Reactome" id="R-RNO-5674135">
    <property type="pathway name" value="MAP2K and MAPK activation"/>
</dbReference>
<dbReference type="Reactome" id="R-RNO-5686938">
    <property type="pathway name" value="Regulation of TLR by endogenous ligand"/>
</dbReference>
<dbReference type="Reactome" id="R-RNO-8957275">
    <property type="pathway name" value="Post-translational protein phosphorylation"/>
</dbReference>
<dbReference type="PRO" id="PR:P02680"/>
<dbReference type="Proteomes" id="UP000002494">
    <property type="component" value="Chromosome 2"/>
</dbReference>
<dbReference type="Bgee" id="ENSRNOG00000025074">
    <property type="expression patterns" value="Expressed in liver and 18 other cell types or tissues"/>
</dbReference>
<dbReference type="GO" id="GO:0072562">
    <property type="term" value="C:blood microparticle"/>
    <property type="evidence" value="ECO:0000314"/>
    <property type="project" value="RGD"/>
</dbReference>
<dbReference type="GO" id="GO:0005938">
    <property type="term" value="C:cell cortex"/>
    <property type="evidence" value="ECO:0000266"/>
    <property type="project" value="RGD"/>
</dbReference>
<dbReference type="GO" id="GO:0009986">
    <property type="term" value="C:cell surface"/>
    <property type="evidence" value="ECO:0000266"/>
    <property type="project" value="RGD"/>
</dbReference>
<dbReference type="GO" id="GO:0062023">
    <property type="term" value="C:collagen-containing extracellular matrix"/>
    <property type="evidence" value="ECO:0000318"/>
    <property type="project" value="GO_Central"/>
</dbReference>
<dbReference type="GO" id="GO:0009897">
    <property type="term" value="C:external side of plasma membrane"/>
    <property type="evidence" value="ECO:0000266"/>
    <property type="project" value="RGD"/>
</dbReference>
<dbReference type="GO" id="GO:0005615">
    <property type="term" value="C:extracellular space"/>
    <property type="evidence" value="ECO:0000266"/>
    <property type="project" value="RGD"/>
</dbReference>
<dbReference type="GO" id="GO:0005577">
    <property type="term" value="C:fibrinogen complex"/>
    <property type="evidence" value="ECO:0000266"/>
    <property type="project" value="RGD"/>
</dbReference>
<dbReference type="GO" id="GO:0031091">
    <property type="term" value="C:platelet alpha granule"/>
    <property type="evidence" value="ECO:0000266"/>
    <property type="project" value="RGD"/>
</dbReference>
<dbReference type="GO" id="GO:0045202">
    <property type="term" value="C:synapse"/>
    <property type="evidence" value="ECO:0000266"/>
    <property type="project" value="RGD"/>
</dbReference>
<dbReference type="GO" id="GO:0050839">
    <property type="term" value="F:cell adhesion molecule binding"/>
    <property type="evidence" value="ECO:0000266"/>
    <property type="project" value="RGD"/>
</dbReference>
<dbReference type="GO" id="GO:0042802">
    <property type="term" value="F:identical protein binding"/>
    <property type="evidence" value="ECO:0000353"/>
    <property type="project" value="RGD"/>
</dbReference>
<dbReference type="GO" id="GO:0046872">
    <property type="term" value="F:metal ion binding"/>
    <property type="evidence" value="ECO:0007669"/>
    <property type="project" value="UniProtKB-KW"/>
</dbReference>
<dbReference type="GO" id="GO:0005102">
    <property type="term" value="F:signaling receptor binding"/>
    <property type="evidence" value="ECO:0000266"/>
    <property type="project" value="RGD"/>
</dbReference>
<dbReference type="GO" id="GO:0005198">
    <property type="term" value="F:structural molecule activity"/>
    <property type="evidence" value="ECO:0000266"/>
    <property type="project" value="RGD"/>
</dbReference>
<dbReference type="GO" id="GO:0072378">
    <property type="term" value="P:blood coagulation, fibrin clot formation"/>
    <property type="evidence" value="ECO:0000266"/>
    <property type="project" value="RGD"/>
</dbReference>
<dbReference type="GO" id="GO:0007160">
    <property type="term" value="P:cell-matrix adhesion"/>
    <property type="evidence" value="ECO:0000266"/>
    <property type="project" value="RGD"/>
</dbReference>
<dbReference type="GO" id="GO:0071347">
    <property type="term" value="P:cellular response to interleukin-1"/>
    <property type="evidence" value="ECO:0000270"/>
    <property type="project" value="RGD"/>
</dbReference>
<dbReference type="GO" id="GO:0071354">
    <property type="term" value="P:cellular response to interleukin-6"/>
    <property type="evidence" value="ECO:0000270"/>
    <property type="project" value="RGD"/>
</dbReference>
<dbReference type="GO" id="GO:0042730">
    <property type="term" value="P:fibrinolysis"/>
    <property type="evidence" value="ECO:0000266"/>
    <property type="project" value="RGD"/>
</dbReference>
<dbReference type="GO" id="GO:2000352">
    <property type="term" value="P:negative regulation of endothelial cell apoptotic process"/>
    <property type="evidence" value="ECO:0000266"/>
    <property type="project" value="RGD"/>
</dbReference>
<dbReference type="GO" id="GO:1902042">
    <property type="term" value="P:negative regulation of extrinsic apoptotic signaling pathway via death domain receptors"/>
    <property type="evidence" value="ECO:0000266"/>
    <property type="project" value="RGD"/>
</dbReference>
<dbReference type="GO" id="GO:0031639">
    <property type="term" value="P:plasminogen activation"/>
    <property type="evidence" value="ECO:0000266"/>
    <property type="project" value="RGD"/>
</dbReference>
<dbReference type="GO" id="GO:0070527">
    <property type="term" value="P:platelet aggregation"/>
    <property type="evidence" value="ECO:0000266"/>
    <property type="project" value="RGD"/>
</dbReference>
<dbReference type="GO" id="GO:0036345">
    <property type="term" value="P:platelet maturation"/>
    <property type="evidence" value="ECO:0000270"/>
    <property type="project" value="RGD"/>
</dbReference>
<dbReference type="GO" id="GO:0070374">
    <property type="term" value="P:positive regulation of ERK1 and ERK2 cascade"/>
    <property type="evidence" value="ECO:0000266"/>
    <property type="project" value="RGD"/>
</dbReference>
<dbReference type="GO" id="GO:0045921">
    <property type="term" value="P:positive regulation of exocytosis"/>
    <property type="evidence" value="ECO:0000266"/>
    <property type="project" value="RGD"/>
</dbReference>
<dbReference type="GO" id="GO:0034116">
    <property type="term" value="P:positive regulation of heterotypic cell-cell adhesion"/>
    <property type="evidence" value="ECO:0000266"/>
    <property type="project" value="RGD"/>
</dbReference>
<dbReference type="GO" id="GO:0090277">
    <property type="term" value="P:positive regulation of peptide hormone secretion"/>
    <property type="evidence" value="ECO:0000266"/>
    <property type="project" value="RGD"/>
</dbReference>
<dbReference type="GO" id="GO:0050714">
    <property type="term" value="P:positive regulation of protein secretion"/>
    <property type="evidence" value="ECO:0000266"/>
    <property type="project" value="RGD"/>
</dbReference>
<dbReference type="GO" id="GO:0045907">
    <property type="term" value="P:positive regulation of vasoconstriction"/>
    <property type="evidence" value="ECO:0000266"/>
    <property type="project" value="RGD"/>
</dbReference>
<dbReference type="GO" id="GO:0051258">
    <property type="term" value="P:protein polymerization"/>
    <property type="evidence" value="ECO:0000266"/>
    <property type="project" value="RGD"/>
</dbReference>
<dbReference type="GO" id="GO:0009306">
    <property type="term" value="P:protein secretion"/>
    <property type="evidence" value="ECO:0000266"/>
    <property type="project" value="RGD"/>
</dbReference>
<dbReference type="GO" id="GO:0065003">
    <property type="term" value="P:protein-containing complex assembly"/>
    <property type="evidence" value="ECO:0000266"/>
    <property type="project" value="RGD"/>
</dbReference>
<dbReference type="GO" id="GO:0051592">
    <property type="term" value="P:response to calcium ion"/>
    <property type="evidence" value="ECO:0000266"/>
    <property type="project" value="RGD"/>
</dbReference>
<dbReference type="CDD" id="cd00087">
    <property type="entry name" value="FReD"/>
    <property type="match status" value="1"/>
</dbReference>
<dbReference type="FunFam" id="1.20.5.50:FF:000005">
    <property type="entry name" value="Fibrinogen gamma chain"/>
    <property type="match status" value="1"/>
</dbReference>
<dbReference type="FunFam" id="3.90.215.10:FF:000002">
    <property type="entry name" value="Fibrinogen gamma chain"/>
    <property type="match status" value="1"/>
</dbReference>
<dbReference type="FunFam" id="4.10.530.10:FF:000002">
    <property type="entry name" value="Fibrinogen gamma chain"/>
    <property type="match status" value="1"/>
</dbReference>
<dbReference type="Gene3D" id="1.20.5.50">
    <property type="match status" value="2"/>
</dbReference>
<dbReference type="Gene3D" id="3.90.215.10">
    <property type="entry name" value="Gamma Fibrinogen, chain A, domain 1"/>
    <property type="match status" value="1"/>
</dbReference>
<dbReference type="Gene3D" id="4.10.530.10">
    <property type="entry name" value="Gamma-fibrinogen Carboxyl Terminal Fragment, domain 2"/>
    <property type="match status" value="1"/>
</dbReference>
<dbReference type="InterPro" id="IPR037579">
    <property type="entry name" value="FIB_ANG-like"/>
</dbReference>
<dbReference type="InterPro" id="IPR036056">
    <property type="entry name" value="Fibrinogen-like_C"/>
</dbReference>
<dbReference type="InterPro" id="IPR014716">
    <property type="entry name" value="Fibrinogen_a/b/g_C_1"/>
</dbReference>
<dbReference type="InterPro" id="IPR002181">
    <property type="entry name" value="Fibrinogen_a/b/g_C_dom"/>
</dbReference>
<dbReference type="InterPro" id="IPR012290">
    <property type="entry name" value="Fibrinogen_a/b/g_coil_dom"/>
</dbReference>
<dbReference type="InterPro" id="IPR020837">
    <property type="entry name" value="Fibrinogen_CS"/>
</dbReference>
<dbReference type="PANTHER" id="PTHR47221">
    <property type="entry name" value="FIBRINOGEN ALPHA CHAIN"/>
    <property type="match status" value="1"/>
</dbReference>
<dbReference type="PANTHER" id="PTHR47221:SF6">
    <property type="entry name" value="FIBRINOGEN ALPHA CHAIN"/>
    <property type="match status" value="1"/>
</dbReference>
<dbReference type="Pfam" id="PF08702">
    <property type="entry name" value="Fib_alpha"/>
    <property type="match status" value="1"/>
</dbReference>
<dbReference type="Pfam" id="PF00147">
    <property type="entry name" value="Fibrinogen_C"/>
    <property type="match status" value="1"/>
</dbReference>
<dbReference type="SMART" id="SM00186">
    <property type="entry name" value="FBG"/>
    <property type="match status" value="1"/>
</dbReference>
<dbReference type="SMART" id="SM01212">
    <property type="entry name" value="Fib_alpha"/>
    <property type="match status" value="1"/>
</dbReference>
<dbReference type="SUPFAM" id="SSF56496">
    <property type="entry name" value="Fibrinogen C-terminal domain-like"/>
    <property type="match status" value="1"/>
</dbReference>
<dbReference type="SUPFAM" id="SSF58010">
    <property type="entry name" value="Fibrinogen coiled-coil and central regions"/>
    <property type="match status" value="1"/>
</dbReference>
<dbReference type="PROSITE" id="PS00514">
    <property type="entry name" value="FIBRINOGEN_C_1"/>
    <property type="match status" value="1"/>
</dbReference>
<dbReference type="PROSITE" id="PS51406">
    <property type="entry name" value="FIBRINOGEN_C_2"/>
    <property type="match status" value="1"/>
</dbReference>
<name>FIBG_RAT</name>
<organism>
    <name type="scientific">Rattus norvegicus</name>
    <name type="common">Rat</name>
    <dbReference type="NCBI Taxonomy" id="10116"/>
    <lineage>
        <taxon>Eukaryota</taxon>
        <taxon>Metazoa</taxon>
        <taxon>Chordata</taxon>
        <taxon>Craniata</taxon>
        <taxon>Vertebrata</taxon>
        <taxon>Euteleostomi</taxon>
        <taxon>Mammalia</taxon>
        <taxon>Eutheria</taxon>
        <taxon>Euarchontoglires</taxon>
        <taxon>Glires</taxon>
        <taxon>Rodentia</taxon>
        <taxon>Myomorpha</taxon>
        <taxon>Muroidea</taxon>
        <taxon>Muridae</taxon>
        <taxon>Murinae</taxon>
        <taxon>Rattus</taxon>
    </lineage>
</organism>
<reference key="1">
    <citation type="journal article" date="1982" name="Cell">
        <title>Organization of the rat gamma-fibrinogen gene: alternative mRNA splice patterns produce the gamma A and gamma B (gamma ') chains of fibrinogen.</title>
        <authorList>
            <person name="Crabtree G.R."/>
            <person name="Kant J.A."/>
        </authorList>
    </citation>
    <scope>NUCLEOTIDE SEQUENCE [GENOMIC DNA / MRNA] (ISOFORMS GAMMA-B AND GAMMA-A)</scope>
</reference>
<reference key="2">
    <citation type="journal article" date="1987" name="Nucleic Acids Res.">
        <title>Nucleotide sequence of the gamma chain gene of rat fibrinogen: conserved intronic sequences.</title>
        <authorList>
            <person name="Morgan J.G."/>
            <person name="Holbrook N.J."/>
            <person name="Crabtree G.R."/>
        </authorList>
    </citation>
    <scope>NUCLEOTIDE SEQUENCE [GENOMIC DNA]</scope>
</reference>
<reference key="3">
    <citation type="journal article" date="2004" name="Genome Res.">
        <title>The status, quality, and expansion of the NIH full-length cDNA project: the Mammalian Gene Collection (MGC).</title>
        <authorList>
            <consortium name="The MGC Project Team"/>
        </authorList>
    </citation>
    <scope>NUCLEOTIDE SEQUENCE [LARGE SCALE MRNA] (ISOFORM GAMMA-A)</scope>
    <source>
        <tissue>Lung</tissue>
    </source>
</reference>
<reference key="4">
    <citation type="journal article" date="1984" name="Proc. Natl. Acad. Sci. U.S.A.">
        <title>Potential basis for regulation of the coordinately expressed fibrinogen genes: homology in the 5' flanking regions.</title>
        <authorList>
            <person name="Fowlkes D.M."/>
            <person name="Mullis N.T."/>
            <person name="Comeau C.M."/>
            <person name="Crabtree G.R."/>
        </authorList>
    </citation>
    <scope>NUCLEOTIDE SEQUENCE [GENOMIC DNA] OF 1-102</scope>
</reference>
<reference key="5">
    <citation type="submission" date="2006-11" db="UniProtKB">
        <authorList>
            <person name="Lubec G."/>
            <person name="Afjehi-Sadat L."/>
        </authorList>
    </citation>
    <scope>PROTEIN SEQUENCE OF 122-134</scope>
    <scope>IDENTIFICATION BY MASS SPECTROMETRY</scope>
    <source>
        <strain>Sprague-Dawley</strain>
        <tissue>Spinal cord</tissue>
    </source>
</reference>
<reference key="6">
    <citation type="journal article" date="2012" name="Nat. Commun.">
        <title>Quantitative maps of protein phosphorylation sites across 14 different rat organs and tissues.</title>
        <authorList>
            <person name="Lundby A."/>
            <person name="Secher A."/>
            <person name="Lage K."/>
            <person name="Nordsborg N.B."/>
            <person name="Dmytriyev A."/>
            <person name="Lundby C."/>
            <person name="Olsen J.V."/>
        </authorList>
    </citation>
    <scope>PHOSPHORYLATION [LARGE SCALE ANALYSIS] AT SER-431</scope>
    <scope>IDENTIFICATION BY MASS SPECTROMETRY [LARGE SCALE ANALYSIS]</scope>
</reference>
<sequence length="445" mass="50633">MNWSLQLRSFILCWALLLLSPTGLAQYTATRDNCCILDERFGSYCPTTCGISDFLNSYQTDVDTDLQTLENILQRAENRTTEAKELIKAIQVYYNPDQPPKPGMIEGATQKSKKMVEEILKYEALLLTHESSIRYLQDIYTSNKQKITNLKQKVAQLEAQCQEPCKDSVRIHDTTGKDCQDIANKGAKESGLYFIRPLKATQQFLVYCEIDGSGNGWTVLQKRLDGSVDFKKNWIQYKEGFGHLSPTGTTEFWLGNEKIHLISMQSTIPYALRIQLKDWSGRTSTADYAMFRVGPESDKYRLTYAYFIGGDAGDAFDGYDFGDDPSDKFFTSHNGMHFSTWDNDNDKFEGNCAEQDGSGWWMNKCHAGHLNGVYYQGGTYSKSSTPNGYDNGIIWATWKTRWYSMKETTMKIIPFNRLSIGDGQQHHMGGSKQVSVEHEVDVEYP</sequence>
<comment type="function">
    <text evidence="2">Together with fibrinogen alpha (FGA) and fibrinogen beta (FGB), polymerizes to form an insoluble fibrin matrix. Has a major function in hemostasis as one of the primary components of blood clots. In addition, functions during the early stages of wound repair to stabilize the lesion and guide cell migration during re-epithelialization. Was originally thought to be essential for platelet aggregation, based on in vitro studies using anticoagulated blood. However, subsequent studies have shown that it is not absolutely required for thrombus formation in vivo. Enhances expression of SELP in activated platelets via an ITGB3-dependent pathway. Maternal fibrinogen is essential for successful pregnancy. Fibrin deposition is also associated with infection, where it protects against IFNG-mediated hemorrhage. May also facilitate the antibacterial immune response via both innate and T-cell mediated pathways.</text>
</comment>
<comment type="subunit">
    <text evidence="3">Heterohexamer; disulfide linked. Contains 2 sets of 3 non-identical chains (alpha, beta and gamma). The 2 heterotrimers are in head to head conformation with the N-termini in a small central domain (By similarity).</text>
</comment>
<comment type="subcellular location">
    <subcellularLocation>
        <location evidence="3">Secreted</location>
    </subcellularLocation>
</comment>
<comment type="alternative products">
    <event type="alternative splicing"/>
    <isoform>
        <id>P02680-1</id>
        <name>Gamma-B</name>
        <sequence type="displayed"/>
    </isoform>
    <isoform>
        <id>P02680-2</id>
        <name>Gamma-A</name>
        <sequence type="described" ref="VSP_001538 VSP_001539"/>
    </isoform>
</comment>
<comment type="domain">
    <text evidence="3">A long coiled coil structure formed by 3 polypeptide chains connects the central nodule to the C-terminal domains (distal nodules). The long C-terminal ends of the alpha chains fold back, contributing a fourth strand to the coiled coil structure.</text>
</comment>
<comment type="PTM">
    <text>Conversion of fibrinogen to fibrin is triggered by thrombin, which cleaves fibrinopeptides A and B from alpha and beta chains, and thus exposes the N-terminal polymerization sites responsible for the formation of the soft clot. The soft clot is converted into the hard clot by factor XIIIA which catalyzes the epsilon-(gamma-glutamyl)lysine cross-linking between gamma chains (stronger) and between alpha chains (weaker) of different monomers.</text>
</comment>
<feature type="signal peptide">
    <location>
        <begin position="1"/>
        <end position="25"/>
    </location>
</feature>
<feature type="chain" id="PRO_0000009101" description="Fibrinogen gamma chain">
    <location>
        <begin position="26"/>
        <end position="445"/>
    </location>
</feature>
<feature type="domain" description="Fibrinogen C-terminal" evidence="6">
    <location>
        <begin position="170"/>
        <end position="416"/>
    </location>
</feature>
<feature type="region of interest" description="Gamma-chain polymerization, binding amino end of another fibrin alpha chain" evidence="1">
    <location>
        <begin position="400"/>
        <end position="422"/>
    </location>
</feature>
<feature type="region of interest" description="Disordered" evidence="7">
    <location>
        <begin position="424"/>
        <end position="445"/>
    </location>
</feature>
<feature type="compositionally biased region" description="Basic and acidic residues" evidence="7">
    <location>
        <begin position="435"/>
        <end position="445"/>
    </location>
</feature>
<feature type="binding site" evidence="4">
    <location>
        <position position="344"/>
    </location>
    <ligand>
        <name>Ca(2+)</name>
        <dbReference type="ChEBI" id="CHEBI:29108"/>
    </ligand>
</feature>
<feature type="binding site" evidence="4">
    <location>
        <position position="346"/>
    </location>
    <ligand>
        <name>Ca(2+)</name>
        <dbReference type="ChEBI" id="CHEBI:29108"/>
    </ligand>
</feature>
<feature type="binding site" evidence="4">
    <location>
        <position position="350"/>
    </location>
    <ligand>
        <name>Ca(2+)</name>
        <dbReference type="ChEBI" id="CHEBI:29108"/>
    </ligand>
</feature>
<feature type="modified residue" description="Phosphoserine" evidence="11">
    <location>
        <position position="431"/>
    </location>
</feature>
<feature type="glycosylation site" description="N-linked (GlcNAc...) asparagine" evidence="5">
    <location>
        <position position="78"/>
    </location>
</feature>
<feature type="disulfide bond" description="Interchain (with gamma chain)" evidence="6">
    <location>
        <position position="34"/>
    </location>
</feature>
<feature type="disulfide bond" description="Interchain (with gamma chain)" evidence="6">
    <location>
        <position position="35"/>
    </location>
</feature>
<feature type="disulfide bond" description="Interchain (with beta chain)" evidence="6">
    <location>
        <position position="45"/>
    </location>
</feature>
<feature type="disulfide bond" description="Interchain (with alpha chain)" evidence="6">
    <location>
        <position position="49"/>
    </location>
</feature>
<feature type="disulfide bond" description="Interchain (with beta chain)" evidence="6">
    <location>
        <position position="161"/>
    </location>
</feature>
<feature type="disulfide bond" description="Interchain (with gamma chain)" evidence="6">
    <location>
        <position position="165"/>
    </location>
</feature>
<feature type="disulfide bond" evidence="6">
    <location>
        <begin position="179"/>
        <end position="208"/>
    </location>
</feature>
<feature type="disulfide bond" evidence="6">
    <location>
        <begin position="352"/>
        <end position="365"/>
    </location>
</feature>
<feature type="cross-link" description="Isoglutamyl lysine isopeptide (Gln-Lys) (interchain with K-432)" evidence="1">
    <location>
        <position position="424"/>
    </location>
</feature>
<feature type="cross-link" description="Isoglutamyl lysine isopeptide (Lys-Gln) (interchain with Q-424)" evidence="1">
    <location>
        <position position="432"/>
    </location>
</feature>
<feature type="splice variant" id="VSP_001538" description="In isoform Gamma-A." evidence="8 9">
    <original>SVE</original>
    <variation>GDM</variation>
    <location>
        <begin position="435"/>
        <end position="437"/>
    </location>
</feature>
<feature type="splice variant" id="VSP_001539" description="In isoform Gamma-A." evidence="8 9">
    <location>
        <begin position="438"/>
        <end position="445"/>
    </location>
</feature>
<feature type="sequence conflict" description="In Ref. 1; J00734 and 2; CAA29289." evidence="10" ref="1 2">
    <original>Q</original>
    <variation>L</variation>
    <location>
        <position position="160"/>
    </location>
</feature>
<feature type="sequence conflict" description="In Ref. 1; J00734." evidence="10" ref="1">
    <original>Q</original>
    <variation>K</variation>
    <location>
        <position position="162"/>
    </location>
</feature>
<feature type="sequence conflict" description="In Ref. 1; J00734 and 2; CAA29289." evidence="10" ref="1 2">
    <original>HDT</original>
    <variation>YDI</variation>
    <location>
        <begin position="172"/>
        <end position="174"/>
    </location>
</feature>
<feature type="sequence conflict" description="In Ref. 1; J00734 and 2; CAA29289." evidence="10" ref="1 2">
    <original>I</original>
    <variation>T</variation>
    <location>
        <position position="182"/>
    </location>
</feature>
<feature type="sequence conflict" description="In Ref. 1; J00734 and 2; CAA29289." evidence="10" ref="1 2">
    <original>F</original>
    <variation>S</variation>
    <location>
        <position position="194"/>
    </location>
</feature>
<feature type="sequence conflict" description="In Ref. 1; J00734 and 2; CAA29289." evidence="10" ref="1 2">
    <original>Q</original>
    <variation>E</variation>
    <location>
        <position position="202"/>
    </location>
</feature>
<feature type="sequence conflict" description="In Ref. 1; J00734." evidence="10" ref="1">
    <original>F</original>
    <variation>S</variation>
    <location>
        <position position="204"/>
    </location>
</feature>
<feature type="sequence conflict" description="In Ref. 1; J00734 and 2; CAA29289." evidence="10" ref="1 2">
    <original>I</original>
    <variation>T</variation>
    <location>
        <position position="210"/>
    </location>
</feature>
<feature type="sequence conflict" description="In Ref. 1; J00734 and 2; CAA29289." evidence="10" ref="1 2">
    <original>S</original>
    <variation>P</variation>
    <location>
        <position position="213"/>
    </location>
</feature>
<feature type="sequence conflict" description="In Ref. 1; J00734 and 2; CAA29289." evidence="10" ref="1 2">
    <original>VLQ</original>
    <variation>EFK</variation>
    <location>
        <begin position="219"/>
        <end position="221"/>
    </location>
</feature>
<feature type="sequence conflict" description="In Ref. 1; J00734 and 2; CAA29289." evidence="10" ref="1 2">
    <original>K</original>
    <variation>L</variation>
    <location>
        <position position="231"/>
    </location>
</feature>
<feature type="sequence conflict" description="In Ref. 1; J00734 and 2; CAA29289." evidence="10" ref="1 2">
    <original>I</original>
    <variation>N</variation>
    <location>
        <position position="259"/>
    </location>
</feature>
<feature type="sequence conflict" description="In Ref. 1; J00734." evidence="10" ref="1">
    <original>E</original>
    <variation>G</variation>
    <location>
        <position position="296"/>
    </location>
</feature>
<feature type="sequence conflict" description="In Ref. 1; J00735." evidence="10" ref="1">
    <original>V</original>
    <variation>G</variation>
    <location>
        <position position="373"/>
    </location>
</feature>
<feature type="sequence conflict" description="In Ref. 1; J00735." evidence="10" ref="1">
    <original>R</original>
    <variation>S</variation>
    <location>
        <position position="401"/>
    </location>
</feature>
<accession>P02680</accession>
<accession>Q68FY3</accession>
<evidence type="ECO:0000250" key="1"/>
<evidence type="ECO:0000250" key="2">
    <source>
        <dbReference type="UniProtKB" id="E9PV24"/>
    </source>
</evidence>
<evidence type="ECO:0000250" key="3">
    <source>
        <dbReference type="UniProtKB" id="P02679"/>
    </source>
</evidence>
<evidence type="ECO:0000250" key="4">
    <source>
        <dbReference type="UniProtKB" id="P04115"/>
    </source>
</evidence>
<evidence type="ECO:0000255" key="5"/>
<evidence type="ECO:0000255" key="6">
    <source>
        <dbReference type="PROSITE-ProRule" id="PRU00739"/>
    </source>
</evidence>
<evidence type="ECO:0000256" key="7">
    <source>
        <dbReference type="SAM" id="MobiDB-lite"/>
    </source>
</evidence>
<evidence type="ECO:0000303" key="8">
    <source>
    </source>
</evidence>
<evidence type="ECO:0000303" key="9">
    <source>
    </source>
</evidence>
<evidence type="ECO:0000305" key="10"/>
<evidence type="ECO:0007744" key="11">
    <source>
    </source>
</evidence>
<gene>
    <name type="primary">Fgg</name>
</gene>